<comment type="catalytic activity">
    <reaction>
        <text>deamido-NAD(+) + L-glutamine + ATP + H2O = L-glutamate + AMP + diphosphate + NAD(+) + H(+)</text>
        <dbReference type="Rhea" id="RHEA:24384"/>
        <dbReference type="ChEBI" id="CHEBI:15377"/>
        <dbReference type="ChEBI" id="CHEBI:15378"/>
        <dbReference type="ChEBI" id="CHEBI:29985"/>
        <dbReference type="ChEBI" id="CHEBI:30616"/>
        <dbReference type="ChEBI" id="CHEBI:33019"/>
        <dbReference type="ChEBI" id="CHEBI:57540"/>
        <dbReference type="ChEBI" id="CHEBI:58359"/>
        <dbReference type="ChEBI" id="CHEBI:58437"/>
        <dbReference type="ChEBI" id="CHEBI:456215"/>
        <dbReference type="EC" id="6.3.5.1"/>
    </reaction>
</comment>
<comment type="pathway">
    <text>Cofactor biosynthesis; NAD(+) biosynthesis; NAD(+) from deamido-NAD(+) (L-Gln route): step 1/1.</text>
</comment>
<comment type="similarity">
    <text evidence="4">In the C-terminal section; belongs to the NAD synthetase family.</text>
</comment>
<feature type="chain" id="PRO_0000152247" description="Putative glutamine-dependent NAD(+) synthetase">
    <location>
        <begin position="1"/>
        <end position="700"/>
    </location>
</feature>
<feature type="domain" description="CN hydrolase" evidence="3">
    <location>
        <begin position="5"/>
        <end position="275"/>
    </location>
</feature>
<feature type="region of interest" description="Ligase">
    <location>
        <begin position="327"/>
        <end position="700"/>
    </location>
</feature>
<feature type="active site" description="Proton acceptor; for glutaminase activity" evidence="2">
    <location>
        <position position="45"/>
    </location>
</feature>
<feature type="active site" description="For glutaminase activity" evidence="2">
    <location>
        <position position="114"/>
    </location>
</feature>
<feature type="active site" description="Nucleophile; for glutaminase activity" evidence="2">
    <location>
        <position position="175"/>
    </location>
</feature>
<feature type="active site" evidence="1">
    <location>
        <position position="359"/>
    </location>
</feature>
<feature type="binding site" evidence="1">
    <location>
        <begin position="357"/>
        <end position="364"/>
    </location>
    <ligand>
        <name>ATP</name>
        <dbReference type="ChEBI" id="CHEBI:30616"/>
    </ligand>
</feature>
<reference key="1">
    <citation type="journal article" date="2002" name="Nature">
        <title>The genome sequence of Schizosaccharomyces pombe.</title>
        <authorList>
            <person name="Wood V."/>
            <person name="Gwilliam R."/>
            <person name="Rajandream M.A."/>
            <person name="Lyne M.H."/>
            <person name="Lyne R."/>
            <person name="Stewart A."/>
            <person name="Sgouros J.G."/>
            <person name="Peat N."/>
            <person name="Hayles J."/>
            <person name="Baker S.G."/>
            <person name="Basham D."/>
            <person name="Bowman S."/>
            <person name="Brooks K."/>
            <person name="Brown D."/>
            <person name="Brown S."/>
            <person name="Chillingworth T."/>
            <person name="Churcher C.M."/>
            <person name="Collins M."/>
            <person name="Connor R."/>
            <person name="Cronin A."/>
            <person name="Davis P."/>
            <person name="Feltwell T."/>
            <person name="Fraser A."/>
            <person name="Gentles S."/>
            <person name="Goble A."/>
            <person name="Hamlin N."/>
            <person name="Harris D.E."/>
            <person name="Hidalgo J."/>
            <person name="Hodgson G."/>
            <person name="Holroyd S."/>
            <person name="Hornsby T."/>
            <person name="Howarth S."/>
            <person name="Huckle E.J."/>
            <person name="Hunt S."/>
            <person name="Jagels K."/>
            <person name="James K.D."/>
            <person name="Jones L."/>
            <person name="Jones M."/>
            <person name="Leather S."/>
            <person name="McDonald S."/>
            <person name="McLean J."/>
            <person name="Mooney P."/>
            <person name="Moule S."/>
            <person name="Mungall K.L."/>
            <person name="Murphy L.D."/>
            <person name="Niblett D."/>
            <person name="Odell C."/>
            <person name="Oliver K."/>
            <person name="O'Neil S."/>
            <person name="Pearson D."/>
            <person name="Quail M.A."/>
            <person name="Rabbinowitsch E."/>
            <person name="Rutherford K.M."/>
            <person name="Rutter S."/>
            <person name="Saunders D."/>
            <person name="Seeger K."/>
            <person name="Sharp S."/>
            <person name="Skelton J."/>
            <person name="Simmonds M.N."/>
            <person name="Squares R."/>
            <person name="Squares S."/>
            <person name="Stevens K."/>
            <person name="Taylor K."/>
            <person name="Taylor R.G."/>
            <person name="Tivey A."/>
            <person name="Walsh S.V."/>
            <person name="Warren T."/>
            <person name="Whitehead S."/>
            <person name="Woodward J.R."/>
            <person name="Volckaert G."/>
            <person name="Aert R."/>
            <person name="Robben J."/>
            <person name="Grymonprez B."/>
            <person name="Weltjens I."/>
            <person name="Vanstreels E."/>
            <person name="Rieger M."/>
            <person name="Schaefer M."/>
            <person name="Mueller-Auer S."/>
            <person name="Gabel C."/>
            <person name="Fuchs M."/>
            <person name="Duesterhoeft A."/>
            <person name="Fritzc C."/>
            <person name="Holzer E."/>
            <person name="Moestl D."/>
            <person name="Hilbert H."/>
            <person name="Borzym K."/>
            <person name="Langer I."/>
            <person name="Beck A."/>
            <person name="Lehrach H."/>
            <person name="Reinhardt R."/>
            <person name="Pohl T.M."/>
            <person name="Eger P."/>
            <person name="Zimmermann W."/>
            <person name="Wedler H."/>
            <person name="Wambutt R."/>
            <person name="Purnelle B."/>
            <person name="Goffeau A."/>
            <person name="Cadieu E."/>
            <person name="Dreano S."/>
            <person name="Gloux S."/>
            <person name="Lelaure V."/>
            <person name="Mottier S."/>
            <person name="Galibert F."/>
            <person name="Aves S.J."/>
            <person name="Xiang Z."/>
            <person name="Hunt C."/>
            <person name="Moore K."/>
            <person name="Hurst S.M."/>
            <person name="Lucas M."/>
            <person name="Rochet M."/>
            <person name="Gaillardin C."/>
            <person name="Tallada V.A."/>
            <person name="Garzon A."/>
            <person name="Thode G."/>
            <person name="Daga R.R."/>
            <person name="Cruzado L."/>
            <person name="Jimenez J."/>
            <person name="Sanchez M."/>
            <person name="del Rey F."/>
            <person name="Benito J."/>
            <person name="Dominguez A."/>
            <person name="Revuelta J.L."/>
            <person name="Moreno S."/>
            <person name="Armstrong J."/>
            <person name="Forsburg S.L."/>
            <person name="Cerutti L."/>
            <person name="Lowe T."/>
            <person name="McCombie W.R."/>
            <person name="Paulsen I."/>
            <person name="Potashkin J."/>
            <person name="Shpakovski G.V."/>
            <person name="Ussery D."/>
            <person name="Barrell B.G."/>
            <person name="Nurse P."/>
        </authorList>
    </citation>
    <scope>NUCLEOTIDE SEQUENCE [LARGE SCALE GENOMIC DNA]</scope>
    <source>
        <strain>972 / ATCC 24843</strain>
    </source>
</reference>
<proteinExistence type="inferred from homology"/>
<gene>
    <name type="ORF">SPCC553.02</name>
</gene>
<accession>O74940</accession>
<evidence type="ECO:0000250" key="1"/>
<evidence type="ECO:0000250" key="2">
    <source>
        <dbReference type="UniProtKB" id="P9WJJ3"/>
    </source>
</evidence>
<evidence type="ECO:0000255" key="3">
    <source>
        <dbReference type="PROSITE-ProRule" id="PRU00054"/>
    </source>
</evidence>
<evidence type="ECO:0000305" key="4"/>
<protein>
    <recommendedName>
        <fullName>Putative glutamine-dependent NAD(+) synthetase</fullName>
        <ecNumber>6.3.5.1</ecNumber>
    </recommendedName>
    <alternativeName>
        <fullName>NAD(+) synthase [glutamine-hydrolyzing]</fullName>
    </alternativeName>
</protein>
<dbReference type="EC" id="6.3.5.1"/>
<dbReference type="EMBL" id="CU329672">
    <property type="protein sequence ID" value="CAA19255.1"/>
    <property type="molecule type" value="Genomic_DNA"/>
</dbReference>
<dbReference type="PIR" id="T41401">
    <property type="entry name" value="T41401"/>
</dbReference>
<dbReference type="SMR" id="O74940"/>
<dbReference type="BioGRID" id="276038">
    <property type="interactions" value="2"/>
</dbReference>
<dbReference type="FunCoup" id="O74940">
    <property type="interactions" value="581"/>
</dbReference>
<dbReference type="STRING" id="284812.O74940"/>
<dbReference type="iPTMnet" id="O74940"/>
<dbReference type="PaxDb" id="4896-SPCC553.02.1"/>
<dbReference type="EnsemblFungi" id="SPCC553.02.1">
    <property type="protein sequence ID" value="SPCC553.02.1:pep"/>
    <property type="gene ID" value="SPCC553.02"/>
</dbReference>
<dbReference type="KEGG" id="spo:2539475"/>
<dbReference type="PomBase" id="SPCC553.02"/>
<dbReference type="VEuPathDB" id="FungiDB:SPCC553.02"/>
<dbReference type="eggNOG" id="KOG2303">
    <property type="taxonomic scope" value="Eukaryota"/>
</dbReference>
<dbReference type="HOGENOM" id="CLU_011884_2_0_1"/>
<dbReference type="InParanoid" id="O74940"/>
<dbReference type="OMA" id="TSQEVCN"/>
<dbReference type="PhylomeDB" id="O74940"/>
<dbReference type="Reactome" id="R-SPO-196807">
    <property type="pathway name" value="Nicotinate metabolism"/>
</dbReference>
<dbReference type="UniPathway" id="UPA00253">
    <property type="reaction ID" value="UER00334"/>
</dbReference>
<dbReference type="PRO" id="PR:O74940"/>
<dbReference type="Proteomes" id="UP000002485">
    <property type="component" value="Chromosome III"/>
</dbReference>
<dbReference type="GO" id="GO:0005737">
    <property type="term" value="C:cytoplasm"/>
    <property type="evidence" value="ECO:0000318"/>
    <property type="project" value="GO_Central"/>
</dbReference>
<dbReference type="GO" id="GO:0005829">
    <property type="term" value="C:cytosol"/>
    <property type="evidence" value="ECO:0007005"/>
    <property type="project" value="PomBase"/>
</dbReference>
<dbReference type="GO" id="GO:0005634">
    <property type="term" value="C:nucleus"/>
    <property type="evidence" value="ECO:0000266"/>
    <property type="project" value="PomBase"/>
</dbReference>
<dbReference type="GO" id="GO:0005524">
    <property type="term" value="F:ATP binding"/>
    <property type="evidence" value="ECO:0000255"/>
    <property type="project" value="PomBase"/>
</dbReference>
<dbReference type="GO" id="GO:0004359">
    <property type="term" value="F:glutaminase activity"/>
    <property type="evidence" value="ECO:0000318"/>
    <property type="project" value="GO_Central"/>
</dbReference>
<dbReference type="GO" id="GO:0003952">
    <property type="term" value="F:NAD+ synthase (glutamine-hydrolyzing) activity"/>
    <property type="evidence" value="ECO:0000318"/>
    <property type="project" value="GO_Central"/>
</dbReference>
<dbReference type="GO" id="GO:0009435">
    <property type="term" value="P:NAD biosynthetic process"/>
    <property type="evidence" value="ECO:0000318"/>
    <property type="project" value="GO_Central"/>
</dbReference>
<dbReference type="CDD" id="cd07570">
    <property type="entry name" value="GAT_Gln-NAD-synth"/>
    <property type="match status" value="1"/>
</dbReference>
<dbReference type="CDD" id="cd00553">
    <property type="entry name" value="NAD_synthase"/>
    <property type="match status" value="1"/>
</dbReference>
<dbReference type="FunFam" id="3.40.50.620:FF:000036">
    <property type="entry name" value="Glutamine-dependent NAD(+) synthetase"/>
    <property type="match status" value="1"/>
</dbReference>
<dbReference type="FunFam" id="3.60.110.10:FF:000003">
    <property type="entry name" value="Glutamine-dependent NAD(+) synthetase"/>
    <property type="match status" value="1"/>
</dbReference>
<dbReference type="Gene3D" id="3.60.110.10">
    <property type="entry name" value="Carbon-nitrogen hydrolase"/>
    <property type="match status" value="1"/>
</dbReference>
<dbReference type="Gene3D" id="3.40.50.620">
    <property type="entry name" value="HUPs"/>
    <property type="match status" value="1"/>
</dbReference>
<dbReference type="HAMAP" id="MF_02090">
    <property type="entry name" value="NadE_glutamine_dep"/>
    <property type="match status" value="1"/>
</dbReference>
<dbReference type="InterPro" id="IPR003010">
    <property type="entry name" value="C-N_Hydrolase"/>
</dbReference>
<dbReference type="InterPro" id="IPR036526">
    <property type="entry name" value="C-N_Hydrolase_sf"/>
</dbReference>
<dbReference type="InterPro" id="IPR014445">
    <property type="entry name" value="Gln-dep_NAD_synthase"/>
</dbReference>
<dbReference type="InterPro" id="IPR022310">
    <property type="entry name" value="NAD/GMP_synthase"/>
</dbReference>
<dbReference type="InterPro" id="IPR003694">
    <property type="entry name" value="NAD_synthase"/>
</dbReference>
<dbReference type="InterPro" id="IPR014729">
    <property type="entry name" value="Rossmann-like_a/b/a_fold"/>
</dbReference>
<dbReference type="NCBIfam" id="TIGR00552">
    <property type="entry name" value="nadE"/>
    <property type="match status" value="1"/>
</dbReference>
<dbReference type="PANTHER" id="PTHR23090:SF9">
    <property type="entry name" value="GLUTAMINE-DEPENDENT NAD(+) SYNTHETASE"/>
    <property type="match status" value="1"/>
</dbReference>
<dbReference type="PANTHER" id="PTHR23090">
    <property type="entry name" value="NH 3 /GLUTAMINE-DEPENDENT NAD + SYNTHETASE"/>
    <property type="match status" value="1"/>
</dbReference>
<dbReference type="Pfam" id="PF00795">
    <property type="entry name" value="CN_hydrolase"/>
    <property type="match status" value="1"/>
</dbReference>
<dbReference type="Pfam" id="PF02540">
    <property type="entry name" value="NAD_synthase"/>
    <property type="match status" value="1"/>
</dbReference>
<dbReference type="PIRSF" id="PIRSF006630">
    <property type="entry name" value="NADS_GAT"/>
    <property type="match status" value="1"/>
</dbReference>
<dbReference type="SUPFAM" id="SSF52402">
    <property type="entry name" value="Adenine nucleotide alpha hydrolases-like"/>
    <property type="match status" value="1"/>
</dbReference>
<dbReference type="SUPFAM" id="SSF56317">
    <property type="entry name" value="Carbon-nitrogen hydrolase"/>
    <property type="match status" value="1"/>
</dbReference>
<dbReference type="PROSITE" id="PS50263">
    <property type="entry name" value="CN_HYDROLASE"/>
    <property type="match status" value="1"/>
</dbReference>
<keyword id="KW-0067">ATP-binding</keyword>
<keyword id="KW-0436">Ligase</keyword>
<keyword id="KW-0520">NAD</keyword>
<keyword id="KW-0547">Nucleotide-binding</keyword>
<keyword id="KW-1185">Reference proteome</keyword>
<name>NADE_SCHPO</name>
<sequence>MERYVTIASCQLNQWAMDFEGNRLRIIDSIKEAKRQNASLRVGPELEVTGYGCEDHFLESDTYYHSWEMLCSIIHDPDCQDILLDIGMPVMHKAMRHNCRILALNGKILLIRPKIWLCDDGNFRESRWFTPWLRPRVVETHYLPTFVAKSLNQTTVPIGDAILQCNETVVGVETCEELFTPNSPHIDMALDGVEIFINASGSHHELRKLTTRVNLIQNATEKCGGIYLYSNQRGCDGGRLYYDGSSMIFANGKMLAQGHQFSLKDVEVISATVDVDTVRSYRFQPSHGIQGVTRPSYERIHVNFSLSSYQQDYDIYRKPTDPIEVTIPLPEEEITFGPACWLWDYLRRSHAAGFFLPLSGGLDSCSTAVLVYSMCRIVCKAMEEDDAQVLSDVRRIVGDPSYSSTDPKKLLNHLFYTAFMGSEHSSKETRSRAKELSSLIGSYHTDVNIDTMTSAVVKLFALVTGKTPQFRSNGGTNAENLALQNIQARSRMLLGYLFAQLLPWVRGYSGSLLVLGSSNVDECLRGYLTKYDCSSADINPIGGISKTDLKSFLRYAKEALDLPILQEFLDATPTAELEPTTESYVQSDEADMGMTYAELSVFGRLRKISKCGPYSMFTQLMHQWGDRLSPSQVAEKVKRFFHYYGINRHKMTTLTPSYHAETYGVDDNRYDLRQFLYPSWTWQNKKIDALASKFEQHQRK</sequence>
<organism>
    <name type="scientific">Schizosaccharomyces pombe (strain 972 / ATCC 24843)</name>
    <name type="common">Fission yeast</name>
    <dbReference type="NCBI Taxonomy" id="284812"/>
    <lineage>
        <taxon>Eukaryota</taxon>
        <taxon>Fungi</taxon>
        <taxon>Dikarya</taxon>
        <taxon>Ascomycota</taxon>
        <taxon>Taphrinomycotina</taxon>
        <taxon>Schizosaccharomycetes</taxon>
        <taxon>Schizosaccharomycetales</taxon>
        <taxon>Schizosaccharomycetaceae</taxon>
        <taxon>Schizosaccharomyces</taxon>
    </lineage>
</organism>